<sequence>MSVRIRLKRMGAKKRPYYRIVVMDSSSPRDGRAIEELGYYHPVERQNQVKINKNKFQEWVDKGAIPSDTVKRILNKSNFKVDN</sequence>
<protein>
    <recommendedName>
        <fullName evidence="1">Small ribosomal subunit protein bS16</fullName>
    </recommendedName>
    <alternativeName>
        <fullName evidence="2">30S ribosomal protein S16</fullName>
    </alternativeName>
</protein>
<proteinExistence type="inferred from homology"/>
<gene>
    <name evidence="1" type="primary">rpsP</name>
    <name type="ordered locus">BDU_698</name>
</gene>
<keyword id="KW-0687">Ribonucleoprotein</keyword>
<keyword id="KW-0689">Ribosomal protein</keyword>
<comment type="similarity">
    <text evidence="1">Belongs to the bacterial ribosomal protein bS16 family.</text>
</comment>
<name>RS16_BORDL</name>
<accession>B5RMP0</accession>
<organism>
    <name type="scientific">Borrelia duttonii (strain Ly)</name>
    <dbReference type="NCBI Taxonomy" id="412419"/>
    <lineage>
        <taxon>Bacteria</taxon>
        <taxon>Pseudomonadati</taxon>
        <taxon>Spirochaetota</taxon>
        <taxon>Spirochaetia</taxon>
        <taxon>Spirochaetales</taxon>
        <taxon>Borreliaceae</taxon>
        <taxon>Borrelia</taxon>
    </lineage>
</organism>
<evidence type="ECO:0000255" key="1">
    <source>
        <dbReference type="HAMAP-Rule" id="MF_00385"/>
    </source>
</evidence>
<evidence type="ECO:0000305" key="2"/>
<dbReference type="EMBL" id="CP000976">
    <property type="protein sequence ID" value="ACH93626.1"/>
    <property type="molecule type" value="Genomic_DNA"/>
</dbReference>
<dbReference type="RefSeq" id="WP_012538435.1">
    <property type="nucleotide sequence ID" value="NC_011229.1"/>
</dbReference>
<dbReference type="SMR" id="B5RMP0"/>
<dbReference type="STRING" id="412419.BDU_698"/>
<dbReference type="KEGG" id="bdu:BDU_698"/>
<dbReference type="eggNOG" id="COG0228">
    <property type="taxonomic scope" value="Bacteria"/>
</dbReference>
<dbReference type="HOGENOM" id="CLU_100590_5_0_12"/>
<dbReference type="OrthoDB" id="9807878at2"/>
<dbReference type="Proteomes" id="UP000000611">
    <property type="component" value="Chromosome"/>
</dbReference>
<dbReference type="GO" id="GO:0005737">
    <property type="term" value="C:cytoplasm"/>
    <property type="evidence" value="ECO:0007669"/>
    <property type="project" value="UniProtKB-ARBA"/>
</dbReference>
<dbReference type="GO" id="GO:0015935">
    <property type="term" value="C:small ribosomal subunit"/>
    <property type="evidence" value="ECO:0007669"/>
    <property type="project" value="TreeGrafter"/>
</dbReference>
<dbReference type="GO" id="GO:0003735">
    <property type="term" value="F:structural constituent of ribosome"/>
    <property type="evidence" value="ECO:0007669"/>
    <property type="project" value="InterPro"/>
</dbReference>
<dbReference type="GO" id="GO:0006412">
    <property type="term" value="P:translation"/>
    <property type="evidence" value="ECO:0007669"/>
    <property type="project" value="UniProtKB-UniRule"/>
</dbReference>
<dbReference type="Gene3D" id="3.30.1320.10">
    <property type="match status" value="1"/>
</dbReference>
<dbReference type="HAMAP" id="MF_00385">
    <property type="entry name" value="Ribosomal_bS16"/>
    <property type="match status" value="1"/>
</dbReference>
<dbReference type="InterPro" id="IPR000307">
    <property type="entry name" value="Ribosomal_bS16"/>
</dbReference>
<dbReference type="InterPro" id="IPR020592">
    <property type="entry name" value="Ribosomal_bS16_CS"/>
</dbReference>
<dbReference type="InterPro" id="IPR023803">
    <property type="entry name" value="Ribosomal_bS16_dom_sf"/>
</dbReference>
<dbReference type="NCBIfam" id="TIGR00002">
    <property type="entry name" value="S16"/>
    <property type="match status" value="1"/>
</dbReference>
<dbReference type="PANTHER" id="PTHR12919">
    <property type="entry name" value="30S RIBOSOMAL PROTEIN S16"/>
    <property type="match status" value="1"/>
</dbReference>
<dbReference type="PANTHER" id="PTHR12919:SF20">
    <property type="entry name" value="SMALL RIBOSOMAL SUBUNIT PROTEIN BS16M"/>
    <property type="match status" value="1"/>
</dbReference>
<dbReference type="Pfam" id="PF00886">
    <property type="entry name" value="Ribosomal_S16"/>
    <property type="match status" value="1"/>
</dbReference>
<dbReference type="SUPFAM" id="SSF54565">
    <property type="entry name" value="Ribosomal protein S16"/>
    <property type="match status" value="1"/>
</dbReference>
<dbReference type="PROSITE" id="PS00732">
    <property type="entry name" value="RIBOSOMAL_S16"/>
    <property type="match status" value="1"/>
</dbReference>
<reference key="1">
    <citation type="journal article" date="2008" name="PLoS Genet.">
        <title>The genome of Borrelia recurrentis, the agent of deadly louse-borne relapsing fever, is a degraded subset of tick-borne Borrelia duttonii.</title>
        <authorList>
            <person name="Lescot M."/>
            <person name="Audic S."/>
            <person name="Robert C."/>
            <person name="Nguyen T.T."/>
            <person name="Blanc G."/>
            <person name="Cutler S.J."/>
            <person name="Wincker P."/>
            <person name="Couloux A."/>
            <person name="Claverie J.-M."/>
            <person name="Raoult D."/>
            <person name="Drancourt M."/>
        </authorList>
    </citation>
    <scope>NUCLEOTIDE SEQUENCE [LARGE SCALE GENOMIC DNA]</scope>
    <source>
        <strain>Ly</strain>
    </source>
</reference>
<feature type="chain" id="PRO_1000196343" description="Small ribosomal subunit protein bS16">
    <location>
        <begin position="1"/>
        <end position="83"/>
    </location>
</feature>